<feature type="chain" id="PRO_1000008096" description="DNA mismatch repair protein MutS">
    <location>
        <begin position="1"/>
        <end position="856"/>
    </location>
</feature>
<feature type="binding site" evidence="1">
    <location>
        <begin position="618"/>
        <end position="625"/>
    </location>
    <ligand>
        <name>ATP</name>
        <dbReference type="ChEBI" id="CHEBI:30616"/>
    </ligand>
</feature>
<proteinExistence type="inferred from homology"/>
<protein>
    <recommendedName>
        <fullName evidence="1">DNA mismatch repair protein MutS</fullName>
    </recommendedName>
</protein>
<organism>
    <name type="scientific">Shewanella putrefaciens (strain CN-32 / ATCC BAA-453)</name>
    <dbReference type="NCBI Taxonomy" id="319224"/>
    <lineage>
        <taxon>Bacteria</taxon>
        <taxon>Pseudomonadati</taxon>
        <taxon>Pseudomonadota</taxon>
        <taxon>Gammaproteobacteria</taxon>
        <taxon>Alteromonadales</taxon>
        <taxon>Shewanellaceae</taxon>
        <taxon>Shewanella</taxon>
    </lineage>
</organism>
<comment type="function">
    <text evidence="1">This protein is involved in the repair of mismatches in DNA. It is possible that it carries out the mismatch recognition step. This protein has a weak ATPase activity.</text>
</comment>
<comment type="similarity">
    <text evidence="1">Belongs to the DNA mismatch repair MutS family.</text>
</comment>
<reference key="1">
    <citation type="submission" date="2007-04" db="EMBL/GenBank/DDBJ databases">
        <title>Complete sequence of Shewanella putrefaciens CN-32.</title>
        <authorList>
            <consortium name="US DOE Joint Genome Institute"/>
            <person name="Copeland A."/>
            <person name="Lucas S."/>
            <person name="Lapidus A."/>
            <person name="Barry K."/>
            <person name="Detter J.C."/>
            <person name="Glavina del Rio T."/>
            <person name="Hammon N."/>
            <person name="Israni S."/>
            <person name="Dalin E."/>
            <person name="Tice H."/>
            <person name="Pitluck S."/>
            <person name="Chain P."/>
            <person name="Malfatti S."/>
            <person name="Shin M."/>
            <person name="Vergez L."/>
            <person name="Schmutz J."/>
            <person name="Larimer F."/>
            <person name="Land M."/>
            <person name="Hauser L."/>
            <person name="Kyrpides N."/>
            <person name="Mikhailova N."/>
            <person name="Romine M.F."/>
            <person name="Fredrickson J."/>
            <person name="Tiedje J."/>
            <person name="Richardson P."/>
        </authorList>
    </citation>
    <scope>NUCLEOTIDE SEQUENCE [LARGE SCALE GENOMIC DNA]</scope>
    <source>
        <strain>CN-32 / ATCC BAA-453</strain>
    </source>
</reference>
<evidence type="ECO:0000255" key="1">
    <source>
        <dbReference type="HAMAP-Rule" id="MF_00096"/>
    </source>
</evidence>
<dbReference type="EMBL" id="CP000681">
    <property type="protein sequence ID" value="ABP76467.1"/>
    <property type="molecule type" value="Genomic_DNA"/>
</dbReference>
<dbReference type="SMR" id="A4Y934"/>
<dbReference type="STRING" id="319224.Sputcn32_2748"/>
<dbReference type="KEGG" id="spc:Sputcn32_2748"/>
<dbReference type="eggNOG" id="COG0249">
    <property type="taxonomic scope" value="Bacteria"/>
</dbReference>
<dbReference type="HOGENOM" id="CLU_002472_4_0_6"/>
<dbReference type="GO" id="GO:0005829">
    <property type="term" value="C:cytosol"/>
    <property type="evidence" value="ECO:0007669"/>
    <property type="project" value="TreeGrafter"/>
</dbReference>
<dbReference type="GO" id="GO:0005524">
    <property type="term" value="F:ATP binding"/>
    <property type="evidence" value="ECO:0007669"/>
    <property type="project" value="UniProtKB-UniRule"/>
</dbReference>
<dbReference type="GO" id="GO:0140664">
    <property type="term" value="F:ATP-dependent DNA damage sensor activity"/>
    <property type="evidence" value="ECO:0007669"/>
    <property type="project" value="InterPro"/>
</dbReference>
<dbReference type="GO" id="GO:0003684">
    <property type="term" value="F:damaged DNA binding"/>
    <property type="evidence" value="ECO:0007669"/>
    <property type="project" value="UniProtKB-UniRule"/>
</dbReference>
<dbReference type="GO" id="GO:0030983">
    <property type="term" value="F:mismatched DNA binding"/>
    <property type="evidence" value="ECO:0007669"/>
    <property type="project" value="InterPro"/>
</dbReference>
<dbReference type="GO" id="GO:0006298">
    <property type="term" value="P:mismatch repair"/>
    <property type="evidence" value="ECO:0007669"/>
    <property type="project" value="UniProtKB-UniRule"/>
</dbReference>
<dbReference type="CDD" id="cd03284">
    <property type="entry name" value="ABC_MutS1"/>
    <property type="match status" value="1"/>
</dbReference>
<dbReference type="FunFam" id="1.10.1420.10:FF:000002">
    <property type="entry name" value="DNA mismatch repair protein MutS"/>
    <property type="match status" value="1"/>
</dbReference>
<dbReference type="FunFam" id="3.30.420.110:FF:000001">
    <property type="entry name" value="DNA mismatch repair protein MutS"/>
    <property type="match status" value="1"/>
</dbReference>
<dbReference type="FunFam" id="3.40.1170.10:FF:000001">
    <property type="entry name" value="DNA mismatch repair protein MutS"/>
    <property type="match status" value="1"/>
</dbReference>
<dbReference type="FunFam" id="3.40.50.300:FF:000283">
    <property type="entry name" value="DNA mismatch repair protein MutS"/>
    <property type="match status" value="1"/>
</dbReference>
<dbReference type="Gene3D" id="1.10.1420.10">
    <property type="match status" value="2"/>
</dbReference>
<dbReference type="Gene3D" id="6.10.140.430">
    <property type="match status" value="1"/>
</dbReference>
<dbReference type="Gene3D" id="3.40.1170.10">
    <property type="entry name" value="DNA repair protein MutS, domain I"/>
    <property type="match status" value="1"/>
</dbReference>
<dbReference type="Gene3D" id="3.30.420.110">
    <property type="entry name" value="MutS, connector domain"/>
    <property type="match status" value="1"/>
</dbReference>
<dbReference type="Gene3D" id="3.40.50.300">
    <property type="entry name" value="P-loop containing nucleotide triphosphate hydrolases"/>
    <property type="match status" value="1"/>
</dbReference>
<dbReference type="HAMAP" id="MF_00096">
    <property type="entry name" value="MutS"/>
    <property type="match status" value="1"/>
</dbReference>
<dbReference type="InterPro" id="IPR005748">
    <property type="entry name" value="DNA_mismatch_repair_MutS"/>
</dbReference>
<dbReference type="InterPro" id="IPR007695">
    <property type="entry name" value="DNA_mismatch_repair_MutS-lik_N"/>
</dbReference>
<dbReference type="InterPro" id="IPR017261">
    <property type="entry name" value="DNA_mismatch_repair_MutS/MSH"/>
</dbReference>
<dbReference type="InterPro" id="IPR000432">
    <property type="entry name" value="DNA_mismatch_repair_MutS_C"/>
</dbReference>
<dbReference type="InterPro" id="IPR007861">
    <property type="entry name" value="DNA_mismatch_repair_MutS_clamp"/>
</dbReference>
<dbReference type="InterPro" id="IPR007696">
    <property type="entry name" value="DNA_mismatch_repair_MutS_core"/>
</dbReference>
<dbReference type="InterPro" id="IPR016151">
    <property type="entry name" value="DNA_mismatch_repair_MutS_N"/>
</dbReference>
<dbReference type="InterPro" id="IPR036187">
    <property type="entry name" value="DNA_mismatch_repair_MutS_sf"/>
</dbReference>
<dbReference type="InterPro" id="IPR007860">
    <property type="entry name" value="DNA_mmatch_repair_MutS_con_dom"/>
</dbReference>
<dbReference type="InterPro" id="IPR045076">
    <property type="entry name" value="MutS"/>
</dbReference>
<dbReference type="InterPro" id="IPR036678">
    <property type="entry name" value="MutS_con_dom_sf"/>
</dbReference>
<dbReference type="InterPro" id="IPR027417">
    <property type="entry name" value="P-loop_NTPase"/>
</dbReference>
<dbReference type="NCBIfam" id="TIGR01070">
    <property type="entry name" value="mutS1"/>
    <property type="match status" value="1"/>
</dbReference>
<dbReference type="NCBIfam" id="NF003810">
    <property type="entry name" value="PRK05399.1"/>
    <property type="match status" value="1"/>
</dbReference>
<dbReference type="PANTHER" id="PTHR11361:SF34">
    <property type="entry name" value="DNA MISMATCH REPAIR PROTEIN MSH1, MITOCHONDRIAL"/>
    <property type="match status" value="1"/>
</dbReference>
<dbReference type="PANTHER" id="PTHR11361">
    <property type="entry name" value="DNA MISMATCH REPAIR PROTEIN MUTS FAMILY MEMBER"/>
    <property type="match status" value="1"/>
</dbReference>
<dbReference type="Pfam" id="PF01624">
    <property type="entry name" value="MutS_I"/>
    <property type="match status" value="1"/>
</dbReference>
<dbReference type="Pfam" id="PF05188">
    <property type="entry name" value="MutS_II"/>
    <property type="match status" value="1"/>
</dbReference>
<dbReference type="Pfam" id="PF05192">
    <property type="entry name" value="MutS_III"/>
    <property type="match status" value="1"/>
</dbReference>
<dbReference type="Pfam" id="PF05190">
    <property type="entry name" value="MutS_IV"/>
    <property type="match status" value="1"/>
</dbReference>
<dbReference type="Pfam" id="PF00488">
    <property type="entry name" value="MutS_V"/>
    <property type="match status" value="1"/>
</dbReference>
<dbReference type="PIRSF" id="PIRSF037677">
    <property type="entry name" value="DNA_mis_repair_Msh6"/>
    <property type="match status" value="1"/>
</dbReference>
<dbReference type="SMART" id="SM00534">
    <property type="entry name" value="MUTSac"/>
    <property type="match status" value="1"/>
</dbReference>
<dbReference type="SMART" id="SM00533">
    <property type="entry name" value="MUTSd"/>
    <property type="match status" value="1"/>
</dbReference>
<dbReference type="SUPFAM" id="SSF55271">
    <property type="entry name" value="DNA repair protein MutS, domain I"/>
    <property type="match status" value="1"/>
</dbReference>
<dbReference type="SUPFAM" id="SSF53150">
    <property type="entry name" value="DNA repair protein MutS, domain II"/>
    <property type="match status" value="1"/>
</dbReference>
<dbReference type="SUPFAM" id="SSF48334">
    <property type="entry name" value="DNA repair protein MutS, domain III"/>
    <property type="match status" value="1"/>
</dbReference>
<dbReference type="SUPFAM" id="SSF52540">
    <property type="entry name" value="P-loop containing nucleoside triphosphate hydrolases"/>
    <property type="match status" value="1"/>
</dbReference>
<dbReference type="PROSITE" id="PS00486">
    <property type="entry name" value="DNA_MISMATCH_REPAIR_2"/>
    <property type="match status" value="1"/>
</dbReference>
<keyword id="KW-0067">ATP-binding</keyword>
<keyword id="KW-0227">DNA damage</keyword>
<keyword id="KW-0234">DNA repair</keyword>
<keyword id="KW-0238">DNA-binding</keyword>
<keyword id="KW-0547">Nucleotide-binding</keyword>
<accession>A4Y934</accession>
<sequence length="856" mass="95475">MNVIDTDDLEKHTPMMRQYLTMKAEHHDMLLFYRMGDFYELFYDDAKRASELLGISLTARGKSGGDPIPMAGIPYHAVEGYLAKLVQIGQSVAICEQIGDPATAKGPVERKVVRIVTPGTLTDEALLQERQDNLLAAVYQGKVGFGYATLDVSSGRFVIAELDTKESLEAELQRTNPVEILYSEDFGELGLLSHFKGKRRRPEWEFDYDTSIKLLLAQFGTKDLHGFGISDARLSLQAAGCLMQYVKDTQRTTLPHINAIIRFNQADSIVLDAATRRNLELTQNLAGGRDNTLAAVLDNTATAMGSRMLQRWIHQPLRDPNQIIARQTAVNELLKTGTHEPLHEQLKALGDIERIMARLALRTARPRDFARLRQALSLLPELQQSLSVLNAPHTVKLCQYLGEFPEEQALLERAIVDNPPMLIRDGGVIREGYNNELDEWRGLSEGASDYLVQLEAREKERTGINTLKVGYNRVHGYYIEVSRLQSSQVPLNYQRRQTLKNMERYITPELKEYEEKVLSSQGKALALEKQLWEQLFDLILPKLHELQAFARAAAELDVLSNFAERAETLGYICPQLSQDIGVQIDAGRHPVVERVSQTPFIANPVTLHNQRRMLIVTGPNMGGKSTYMRQVALITLMAHIGCFVPAERAVIGPIDRIFTRIGASDDLASGRSTFMVEMTETANILHNATAQSLVLMDEIGRGTSTYDGLSLAWSAAEYLAQQIGAMTLFATHYFELTQLPDLMAGVYNVHLDAIEHEDTIAFMHAVQEGAASKSYGLQVAALAGVPAKVIKAAKHKLQQLESRDHQLEGTKTPIQTLLALPEPAENPALTKLQAINPDNLTPKQALDLLYELKRLS</sequence>
<name>MUTS_SHEPC</name>
<gene>
    <name evidence="1" type="primary">mutS</name>
    <name type="ordered locus">Sputcn32_2748</name>
</gene>